<feature type="chain" id="PRO_0000293109" description="E3 ubiquitin-protein ligase BRE1-like 2">
    <location>
        <begin position="1"/>
        <end position="900"/>
    </location>
</feature>
<feature type="zinc finger region" description="RING-type" evidence="3">
    <location>
        <begin position="848"/>
        <end position="887"/>
    </location>
</feature>
<feature type="region of interest" description="Disordered" evidence="4">
    <location>
        <begin position="1"/>
        <end position="31"/>
    </location>
</feature>
<feature type="coiled-coil region" evidence="2">
    <location>
        <begin position="63"/>
        <end position="96"/>
    </location>
</feature>
<feature type="coiled-coil region" evidence="2">
    <location>
        <begin position="217"/>
        <end position="300"/>
    </location>
</feature>
<feature type="coiled-coil region" evidence="2">
    <location>
        <begin position="437"/>
        <end position="660"/>
    </location>
</feature>
<feature type="coiled-coil region" evidence="2">
    <location>
        <begin position="706"/>
        <end position="737"/>
    </location>
</feature>
<feature type="compositionally biased region" description="Polar residues" evidence="4">
    <location>
        <begin position="20"/>
        <end position="31"/>
    </location>
</feature>
<feature type="splice variant" id="VSP_038054" description="In isoform 2." evidence="7">
    <location>
        <begin position="1"/>
        <end position="517"/>
    </location>
</feature>
<feature type="splice variant" id="VSP_038055" description="In isoform 2." evidence="7">
    <original>LSN</original>
    <variation>MLT</variation>
    <location>
        <begin position="518"/>
        <end position="520"/>
    </location>
</feature>
<feature type="sequence conflict" description="In Ref. 3; AAM62973." evidence="8" ref="3">
    <original>G</original>
    <variation>D</variation>
    <location>
        <position position="824"/>
    </location>
</feature>
<evidence type="ECO:0000250" key="1"/>
<evidence type="ECO:0000255" key="2"/>
<evidence type="ECO:0000255" key="3">
    <source>
        <dbReference type="PROSITE-ProRule" id="PRU00175"/>
    </source>
</evidence>
<evidence type="ECO:0000256" key="4">
    <source>
        <dbReference type="SAM" id="MobiDB-lite"/>
    </source>
</evidence>
<evidence type="ECO:0000269" key="5">
    <source>
    </source>
</evidence>
<evidence type="ECO:0000269" key="6">
    <source>
    </source>
</evidence>
<evidence type="ECO:0000303" key="7">
    <source ref="3"/>
</evidence>
<evidence type="ECO:0000305" key="8"/>
<name>BRE1B_ARATH</name>
<gene>
    <name type="primary">HUB2</name>
    <name type="synonym">BRE1B</name>
    <name type="ordered locus">At1g55250/At1g55255</name>
    <name type="ORF">F7A10.17</name>
</gene>
<reference key="1">
    <citation type="journal article" date="2000" name="Nature">
        <title>Sequence and analysis of chromosome 1 of the plant Arabidopsis thaliana.</title>
        <authorList>
            <person name="Theologis A."/>
            <person name="Ecker J.R."/>
            <person name="Palm C.J."/>
            <person name="Federspiel N.A."/>
            <person name="Kaul S."/>
            <person name="White O."/>
            <person name="Alonso J."/>
            <person name="Altafi H."/>
            <person name="Araujo R."/>
            <person name="Bowman C.L."/>
            <person name="Brooks S.Y."/>
            <person name="Buehler E."/>
            <person name="Chan A."/>
            <person name="Chao Q."/>
            <person name="Chen H."/>
            <person name="Cheuk R.F."/>
            <person name="Chin C.W."/>
            <person name="Chung M.K."/>
            <person name="Conn L."/>
            <person name="Conway A.B."/>
            <person name="Conway A.R."/>
            <person name="Creasy T.H."/>
            <person name="Dewar K."/>
            <person name="Dunn P."/>
            <person name="Etgu P."/>
            <person name="Feldblyum T.V."/>
            <person name="Feng J.-D."/>
            <person name="Fong B."/>
            <person name="Fujii C.Y."/>
            <person name="Gill J.E."/>
            <person name="Goldsmith A.D."/>
            <person name="Haas B."/>
            <person name="Hansen N.F."/>
            <person name="Hughes B."/>
            <person name="Huizar L."/>
            <person name="Hunter J.L."/>
            <person name="Jenkins J."/>
            <person name="Johnson-Hopson C."/>
            <person name="Khan S."/>
            <person name="Khaykin E."/>
            <person name="Kim C.J."/>
            <person name="Koo H.L."/>
            <person name="Kremenetskaia I."/>
            <person name="Kurtz D.B."/>
            <person name="Kwan A."/>
            <person name="Lam B."/>
            <person name="Langin-Hooper S."/>
            <person name="Lee A."/>
            <person name="Lee J.M."/>
            <person name="Lenz C.A."/>
            <person name="Li J.H."/>
            <person name="Li Y.-P."/>
            <person name="Lin X."/>
            <person name="Liu S.X."/>
            <person name="Liu Z.A."/>
            <person name="Luros J.S."/>
            <person name="Maiti R."/>
            <person name="Marziali A."/>
            <person name="Militscher J."/>
            <person name="Miranda M."/>
            <person name="Nguyen M."/>
            <person name="Nierman W.C."/>
            <person name="Osborne B.I."/>
            <person name="Pai G."/>
            <person name="Peterson J."/>
            <person name="Pham P.K."/>
            <person name="Rizzo M."/>
            <person name="Rooney T."/>
            <person name="Rowley D."/>
            <person name="Sakano H."/>
            <person name="Salzberg S.L."/>
            <person name="Schwartz J.R."/>
            <person name="Shinn P."/>
            <person name="Southwick A.M."/>
            <person name="Sun H."/>
            <person name="Tallon L.J."/>
            <person name="Tambunga G."/>
            <person name="Toriumi M.J."/>
            <person name="Town C.D."/>
            <person name="Utterback T."/>
            <person name="Van Aken S."/>
            <person name="Vaysberg M."/>
            <person name="Vysotskaia V.S."/>
            <person name="Walker M."/>
            <person name="Wu D."/>
            <person name="Yu G."/>
            <person name="Fraser C.M."/>
            <person name="Venter J.C."/>
            <person name="Davis R.W."/>
        </authorList>
    </citation>
    <scope>NUCLEOTIDE SEQUENCE [LARGE SCALE GENOMIC DNA]</scope>
    <source>
        <strain>cv. Columbia</strain>
    </source>
</reference>
<reference key="2">
    <citation type="journal article" date="2017" name="Plant J.">
        <title>Araport11: a complete reannotation of the Arabidopsis thaliana reference genome.</title>
        <authorList>
            <person name="Cheng C.Y."/>
            <person name="Krishnakumar V."/>
            <person name="Chan A.P."/>
            <person name="Thibaud-Nissen F."/>
            <person name="Schobel S."/>
            <person name="Town C.D."/>
        </authorList>
    </citation>
    <scope>GENOME REANNOTATION</scope>
    <source>
        <strain>cv. Columbia</strain>
    </source>
</reference>
<reference key="3">
    <citation type="submission" date="2002-03" db="EMBL/GenBank/DDBJ databases">
        <title>Full-length cDNA from Arabidopsis thaliana.</title>
        <authorList>
            <person name="Brover V.V."/>
            <person name="Troukhan M.E."/>
            <person name="Alexandrov N.A."/>
            <person name="Lu Y.-P."/>
            <person name="Flavell R.B."/>
            <person name="Feldmann K.A."/>
        </authorList>
    </citation>
    <scope>NUCLEOTIDE SEQUENCE [LARGE SCALE MRNA] (ISOFORM 2)</scope>
</reference>
<reference key="4">
    <citation type="submission" date="2006-10" db="EMBL/GenBank/DDBJ databases">
        <title>Arabidopsis ORF clones.</title>
        <authorList>
            <person name="Quinitio C."/>
            <person name="Chen H."/>
            <person name="Kim C.J."/>
            <person name="Shinn P."/>
            <person name="Ecker J.R."/>
        </authorList>
    </citation>
    <scope>NUCLEOTIDE SEQUENCE [LARGE SCALE MRNA] OF 518-900</scope>
    <source>
        <strain>cv. Columbia</strain>
    </source>
</reference>
<reference key="5">
    <citation type="journal article" date="2007" name="Plant Cell">
        <title>The Arabidopsis thaliana homolog of yeast BRE1 has a function in cell cycle regulation during early leaf and root growth.</title>
        <authorList>
            <person name="Fleury D."/>
            <person name="Himanen K."/>
            <person name="Cnops G."/>
            <person name="Nelissen H."/>
            <person name="Boccardi T.M."/>
            <person name="Maere S."/>
            <person name="Beemster G.T.S."/>
            <person name="Neyt P."/>
            <person name="Anami S."/>
            <person name="Robles P."/>
            <person name="Micol J.L."/>
            <person name="Inze D."/>
            <person name="Van Lijsebettens M."/>
        </authorList>
    </citation>
    <scope>IDENTIFICATION</scope>
    <scope>DEVELOPMENTAL STAGE</scope>
    <scope>TISSUE SPECIFICITY</scope>
</reference>
<reference key="6">
    <citation type="journal article" date="2007" name="Plant Cell">
        <title>The absence of histone H2B monoubiquitination in the Arabidopsis hub1 (rdo4) mutant reveals a role for chromatin remodeling in seed dormancy.</title>
        <authorList>
            <person name="Liu Y."/>
            <person name="Koornneef M."/>
            <person name="Soppe W.J.J."/>
        </authorList>
    </citation>
    <scope>FUNCTION</scope>
    <scope>CATALYTIC ACTIVITY</scope>
    <scope>TISSUE SPECIFICITY</scope>
    <scope>SUBCELLULAR LOCATION</scope>
    <scope>DISRUPTION PHENOTYPE</scope>
</reference>
<organism>
    <name type="scientific">Arabidopsis thaliana</name>
    <name type="common">Mouse-ear cress</name>
    <dbReference type="NCBI Taxonomy" id="3702"/>
    <lineage>
        <taxon>Eukaryota</taxon>
        <taxon>Viridiplantae</taxon>
        <taxon>Streptophyta</taxon>
        <taxon>Embryophyta</taxon>
        <taxon>Tracheophyta</taxon>
        <taxon>Spermatophyta</taxon>
        <taxon>Magnoliopsida</taxon>
        <taxon>eudicotyledons</taxon>
        <taxon>Gunneridae</taxon>
        <taxon>Pentapetalae</taxon>
        <taxon>rosids</taxon>
        <taxon>malvids</taxon>
        <taxon>Brassicales</taxon>
        <taxon>Brassicaceae</taxon>
        <taxon>Camelineae</taxon>
        <taxon>Arabidopsis</taxon>
    </lineage>
</organism>
<dbReference type="EC" id="2.3.2.27" evidence="5"/>
<dbReference type="EMBL" id="AC027034">
    <property type="protein sequence ID" value="AAG51572.1"/>
    <property type="status" value="ALT_SEQ"/>
    <property type="molecule type" value="Genomic_DNA"/>
</dbReference>
<dbReference type="EMBL" id="CP002684">
    <property type="protein sequence ID" value="AEE33210.1"/>
    <property type="molecule type" value="Genomic_DNA"/>
</dbReference>
<dbReference type="EMBL" id="CP002684">
    <property type="protein sequence ID" value="AEE33211.1"/>
    <property type="molecule type" value="Genomic_DNA"/>
</dbReference>
<dbReference type="EMBL" id="AY085755">
    <property type="protein sequence ID" value="AAM62973.1"/>
    <property type="molecule type" value="mRNA"/>
</dbReference>
<dbReference type="EMBL" id="BT029207">
    <property type="protein sequence ID" value="ABJ17142.1"/>
    <property type="molecule type" value="mRNA"/>
</dbReference>
<dbReference type="PIR" id="D96594">
    <property type="entry name" value="D96594"/>
</dbReference>
<dbReference type="RefSeq" id="NP_001154428.1">
    <molecule id="Q9C895-2"/>
    <property type="nucleotide sequence ID" value="NM_001160956.1"/>
</dbReference>
<dbReference type="RefSeq" id="NP_564680.4">
    <molecule id="Q9C895-1"/>
    <property type="nucleotide sequence ID" value="NM_104398.4"/>
</dbReference>
<dbReference type="SMR" id="Q9C895"/>
<dbReference type="BioGRID" id="27193">
    <property type="interactions" value="1"/>
</dbReference>
<dbReference type="FunCoup" id="Q9C895">
    <property type="interactions" value="4559"/>
</dbReference>
<dbReference type="IntAct" id="Q9C895">
    <property type="interactions" value="3"/>
</dbReference>
<dbReference type="STRING" id="3702.Q9C895"/>
<dbReference type="iPTMnet" id="Q9C895"/>
<dbReference type="PaxDb" id="3702-AT1G55250.1"/>
<dbReference type="ProteomicsDB" id="240410">
    <molecule id="Q9C895-1"/>
</dbReference>
<dbReference type="EnsemblPlants" id="AT1G55250.1">
    <molecule id="Q9C895-1"/>
    <property type="protein sequence ID" value="AT1G55250.1"/>
    <property type="gene ID" value="AT1G55250"/>
</dbReference>
<dbReference type="EnsemblPlants" id="AT1G55250.2">
    <molecule id="Q9C895-2"/>
    <property type="protein sequence ID" value="AT1G55250.2"/>
    <property type="gene ID" value="AT1G55250"/>
</dbReference>
<dbReference type="GeneID" id="841968"/>
<dbReference type="Gramene" id="AT1G55250.1">
    <molecule id="Q9C895-1"/>
    <property type="protein sequence ID" value="AT1G55250.1"/>
    <property type="gene ID" value="AT1G55250"/>
</dbReference>
<dbReference type="Gramene" id="AT1G55250.2">
    <molecule id="Q9C895-2"/>
    <property type="protein sequence ID" value="AT1G55250.2"/>
    <property type="gene ID" value="AT1G55250"/>
</dbReference>
<dbReference type="KEGG" id="ath:AT1G55250"/>
<dbReference type="Araport" id="AT1G55250"/>
<dbReference type="TAIR" id="AT1G55250">
    <property type="gene designation" value="HUB2"/>
</dbReference>
<dbReference type="eggNOG" id="KOG0978">
    <property type="taxonomic scope" value="Eukaryota"/>
</dbReference>
<dbReference type="HOGENOM" id="CLU_002640_1_0_1"/>
<dbReference type="InParanoid" id="Q9C895"/>
<dbReference type="OrthoDB" id="10266039at2759"/>
<dbReference type="PhylomeDB" id="Q9C895"/>
<dbReference type="UniPathway" id="UPA00143"/>
<dbReference type="PRO" id="PR:Q9C895"/>
<dbReference type="Proteomes" id="UP000006548">
    <property type="component" value="Chromosome 1"/>
</dbReference>
<dbReference type="ExpressionAtlas" id="Q9C895">
    <property type="expression patterns" value="baseline and differential"/>
</dbReference>
<dbReference type="GO" id="GO:0033503">
    <property type="term" value="C:HULC complex"/>
    <property type="evidence" value="ECO:0000318"/>
    <property type="project" value="GO_Central"/>
</dbReference>
<dbReference type="GO" id="GO:0005634">
    <property type="term" value="C:nucleus"/>
    <property type="evidence" value="ECO:0000314"/>
    <property type="project" value="TAIR"/>
</dbReference>
<dbReference type="GO" id="GO:0042803">
    <property type="term" value="F:protein homodimerization activity"/>
    <property type="evidence" value="ECO:0000353"/>
    <property type="project" value="TAIR"/>
</dbReference>
<dbReference type="GO" id="GO:0061630">
    <property type="term" value="F:ubiquitin protein ligase activity"/>
    <property type="evidence" value="ECO:0000318"/>
    <property type="project" value="GO_Central"/>
</dbReference>
<dbReference type="GO" id="GO:0008270">
    <property type="term" value="F:zinc ion binding"/>
    <property type="evidence" value="ECO:0007669"/>
    <property type="project" value="UniProtKB-KW"/>
</dbReference>
<dbReference type="GO" id="GO:0006325">
    <property type="term" value="P:chromatin organization"/>
    <property type="evidence" value="ECO:0007669"/>
    <property type="project" value="UniProtKB-KW"/>
</dbReference>
<dbReference type="GO" id="GO:0045087">
    <property type="term" value="P:innate immune response"/>
    <property type="evidence" value="ECO:0000316"/>
    <property type="project" value="TAIR"/>
</dbReference>
<dbReference type="GO" id="GO:0009965">
    <property type="term" value="P:leaf morphogenesis"/>
    <property type="evidence" value="ECO:0000315"/>
    <property type="project" value="TAIR"/>
</dbReference>
<dbReference type="GO" id="GO:0016567">
    <property type="term" value="P:protein ubiquitination"/>
    <property type="evidence" value="ECO:0007669"/>
    <property type="project" value="UniProtKB-UniPathway"/>
</dbReference>
<dbReference type="GO" id="GO:0010162">
    <property type="term" value="P:seed dormancy process"/>
    <property type="evidence" value="ECO:0000315"/>
    <property type="project" value="TAIR"/>
</dbReference>
<dbReference type="GO" id="GO:0010228">
    <property type="term" value="P:vegetative to reproductive phase transition of meristem"/>
    <property type="evidence" value="ECO:0000315"/>
    <property type="project" value="TAIR"/>
</dbReference>
<dbReference type="CDD" id="cd16499">
    <property type="entry name" value="RING-HC_Bre1-like"/>
    <property type="match status" value="1"/>
</dbReference>
<dbReference type="FunFam" id="1.20.5.340:FF:000065">
    <property type="entry name" value="E3 ubiquitin protein ligase"/>
    <property type="match status" value="1"/>
</dbReference>
<dbReference type="Gene3D" id="1.20.5.340">
    <property type="match status" value="1"/>
</dbReference>
<dbReference type="Gene3D" id="3.30.40.10">
    <property type="entry name" value="Zinc/RING finger domain, C3HC4 (zinc finger)"/>
    <property type="match status" value="1"/>
</dbReference>
<dbReference type="InterPro" id="IPR013956">
    <property type="entry name" value="E3_ubiquit_lig_Bre1"/>
</dbReference>
<dbReference type="InterPro" id="IPR001841">
    <property type="entry name" value="Znf_RING"/>
</dbReference>
<dbReference type="InterPro" id="IPR013083">
    <property type="entry name" value="Znf_RING/FYVE/PHD"/>
</dbReference>
<dbReference type="InterPro" id="IPR017907">
    <property type="entry name" value="Znf_RING_CS"/>
</dbReference>
<dbReference type="PANTHER" id="PTHR23163:SF8">
    <property type="entry name" value="E3 UBIQUITIN-PROTEIN LIGASE BRE1-LIKE 2"/>
    <property type="match status" value="1"/>
</dbReference>
<dbReference type="PANTHER" id="PTHR23163">
    <property type="entry name" value="RING FINGER PROTEIN-RELATED"/>
    <property type="match status" value="1"/>
</dbReference>
<dbReference type="Pfam" id="PF13920">
    <property type="entry name" value="zf-C3HC4_3"/>
    <property type="match status" value="1"/>
</dbReference>
<dbReference type="SMART" id="SM00184">
    <property type="entry name" value="RING"/>
    <property type="match status" value="1"/>
</dbReference>
<dbReference type="SUPFAM" id="SSF57850">
    <property type="entry name" value="RING/U-box"/>
    <property type="match status" value="1"/>
</dbReference>
<dbReference type="PROSITE" id="PS00518">
    <property type="entry name" value="ZF_RING_1"/>
    <property type="match status" value="1"/>
</dbReference>
<dbReference type="PROSITE" id="PS50089">
    <property type="entry name" value="ZF_RING_2"/>
    <property type="match status" value="1"/>
</dbReference>
<sequence>MENQESDEPMQKKPHLLDSVSPNSMARNSSPSHPIAKSVSFFDCDFSLLCLRLVDYEIDVDATVLQLQNQKLVQQLDLQKKQLYDVESKIQELQLNQTSYDDELISVNQLWNQLVDDLILLGVRAGANQEALNYLDIVDKKRVPPCAADETFLCRLLQVDSLDTSKSDEVVRKVEEALALRHSSTMELMGLFENTIDTQKTKAESISQSLHAVKSTEDATIQLSSINDLMKEESKNLREMIDALHVRHKEHSEQIQAYISSHSTDQSELKHLKGQLEEIKAELEENRRKLITLKMQKDAACEGHVTSPAIANGSLSPEKPVDKTKLRELKDSIDEIKIMAEGRLSELQASQEYNLSLSRQCQDIENELKDDQYIYSSRLYSLINDRIHHWNAELDRYKILTEAIQAERSFVMRRDKELNLRAESLEAANHKTTTVGSRIEVLEKKLQSCIIEKNGLELETEEAIQDSERQDIKSEFIAMASTLSKEMEMMEAQLKRWKDTAQDALYLREQAQSLRVSLSNKADEQKGLEDKCAKQMAEIKSLKALIEKLLKEKLQLQNLASICTRECNDDRGLAEIKDSQRKAQAQAEELKNVLDEHFLELRVKAAHETESACQERLATAKAEIAELRTQLDLSEREVLELKEGIKVKEQEAEASIAEMETIGQAYEDMQTQNQHLLQQVAERDDYNIKLVSESVKTKHAYNTHLSEKQVMEKQLHQVNASVENFKARIAHNEEQMKGCFSEAYKLIQEDRHLVISLETTKWEVADADKEFRWLKSAVSSSEKEYEQISRRTDDIKLELDDERREKKKLEEELMELNKELEELGSESVEAAIVRLQEEVKNCKNILKCGVCFDRPKEVVIVKCYHLFCQQCIQRSLEIRHRKCPGCGTAFGQNDVRLVKM</sequence>
<proteinExistence type="evidence at protein level"/>
<comment type="function">
    <text evidence="5">E3 ubiquitin-protein ligase that monoubiquitinates H2B to form H2BK143ub1. H2BK143ub1 gives a specific tag for epigenetic transcriptional activation and is also prerequisite for H3K4me and maybe H3K79me. It thereby plays a central role in histone code and gene regulation. Forms a ubiquitin ligase complex in cooperation with the E2 enzyme UBC2/RAD6.</text>
</comment>
<comment type="catalytic activity">
    <reaction evidence="5">
        <text>S-ubiquitinyl-[E2 ubiquitin-conjugating enzyme]-L-cysteine + [acceptor protein]-L-lysine = [E2 ubiquitin-conjugating enzyme]-L-cysteine + N(6)-ubiquitinyl-[acceptor protein]-L-lysine.</text>
        <dbReference type="EC" id="2.3.2.27"/>
    </reaction>
</comment>
<comment type="pathway">
    <text>Protein modification; protein ubiquitination.</text>
</comment>
<comment type="subunit">
    <text evidence="1">May act as a tetramer consisting of two copies of HUB1 and two copies of HUB2.</text>
</comment>
<comment type="subcellular location">
    <subcellularLocation>
        <location evidence="5">Nucleus</location>
    </subcellularLocation>
</comment>
<comment type="alternative products">
    <event type="alternative splicing"/>
    <isoform>
        <id>Q9C895-1</id>
        <name>1</name>
        <sequence type="displayed"/>
    </isoform>
    <isoform>
        <id>Q9C895-2</id>
        <name>2</name>
        <sequence type="described" ref="VSP_038054 VSP_038055"/>
    </isoform>
</comment>
<comment type="tissue specificity">
    <text evidence="5 6">Ubiquitously expressed.</text>
</comment>
<comment type="developmental stage">
    <text evidence="6">Constant throughout the cell cycle.</text>
</comment>
<comment type="domain">
    <text evidence="1">The RING-type zinc finger domain mediates binding to an E2 ubiquitin-conjugating enzyme.</text>
</comment>
<comment type="disruption phenotype">
    <text evidence="5">Plants have reduced seed dormancy and several pleiotropic phenotypes, including alterations in leaf color, plant architecture and flower morphology.</text>
</comment>
<comment type="miscellaneous">
    <text>HUB1 and HUB2 are involved in the same processes, but are weakly or not redundant.</text>
</comment>
<comment type="miscellaneous">
    <molecule>Isoform 2</molecule>
    <text evidence="8">May be due to an intron retention.</text>
</comment>
<comment type="similarity">
    <text evidence="8">Belongs to the BRE1 family.</text>
</comment>
<comment type="sequence caution" evidence="8">
    <conflict type="erroneous gene model prediction">
        <sequence resource="EMBL-CDS" id="AAG51572"/>
    </conflict>
</comment>
<accession>Q9C895</accession>
<accession>Q058L1</accession>
<accession>Q8LDW7</accession>
<protein>
    <recommendedName>
        <fullName>E3 ubiquitin-protein ligase BRE1-like 2</fullName>
        <ecNumber evidence="5">2.3.2.27</ecNumber>
    </recommendedName>
    <alternativeName>
        <fullName>Protein HISTONE MONOUBIQUITINATION 2</fullName>
        <shortName>AtHUB2</shortName>
    </alternativeName>
    <alternativeName>
        <fullName evidence="8">RING-type E3 ubiquitin transferase BRE1-like 2</fullName>
    </alternativeName>
</protein>
<keyword id="KW-0025">Alternative splicing</keyword>
<keyword id="KW-0156">Chromatin regulator</keyword>
<keyword id="KW-0175">Coiled coil</keyword>
<keyword id="KW-0479">Metal-binding</keyword>
<keyword id="KW-0539">Nucleus</keyword>
<keyword id="KW-1185">Reference proteome</keyword>
<keyword id="KW-0808">Transferase</keyword>
<keyword id="KW-0833">Ubl conjugation pathway</keyword>
<keyword id="KW-0862">Zinc</keyword>
<keyword id="KW-0863">Zinc-finger</keyword>